<accession>P55816</accession>
<keyword id="KW-0903">Direct protein sequencing</keyword>
<keyword id="KW-1015">Disulfide bond</keyword>
<keyword id="KW-0872">Ion channel impairing toxin</keyword>
<keyword id="KW-0960">Knottin</keyword>
<keyword id="KW-0528">Neurotoxin</keyword>
<keyword id="KW-0638">Presynaptic neurotoxin</keyword>
<keyword id="KW-0964">Secreted</keyword>
<keyword id="KW-0800">Toxin</keyword>
<keyword id="KW-0738">Voltage-gated sodium channel impairing toxin</keyword>
<evidence type="ECO:0000250" key="1">
    <source>
        <dbReference type="UniProtKB" id="P49126"/>
    </source>
</evidence>
<evidence type="ECO:0000269" key="2">
    <source>
    </source>
</evidence>
<evidence type="ECO:0000303" key="3">
    <source>
    </source>
</evidence>
<evidence type="ECO:0000305" key="4"/>
<evidence type="ECO:0000305" key="5">
    <source>
    </source>
</evidence>
<dbReference type="SMR" id="P55816"/>
<dbReference type="TCDB" id="8.B.30.1.2">
    <property type="family name" value="the diguetoxin (diguetoxin) family"/>
</dbReference>
<dbReference type="ArachnoServer" id="AS000347">
    <property type="toxin name" value="mu-diguetoxin-Dc1b"/>
</dbReference>
<dbReference type="GO" id="GO:0005576">
    <property type="term" value="C:extracellular region"/>
    <property type="evidence" value="ECO:0007669"/>
    <property type="project" value="UniProtKB-SubCell"/>
</dbReference>
<dbReference type="GO" id="GO:0044231">
    <property type="term" value="C:host cell presynaptic membrane"/>
    <property type="evidence" value="ECO:0007669"/>
    <property type="project" value="UniProtKB-KW"/>
</dbReference>
<dbReference type="GO" id="GO:0017080">
    <property type="term" value="F:sodium channel regulator activity"/>
    <property type="evidence" value="ECO:0007669"/>
    <property type="project" value="UniProtKB-KW"/>
</dbReference>
<dbReference type="GO" id="GO:0090729">
    <property type="term" value="F:toxin activity"/>
    <property type="evidence" value="ECO:0007669"/>
    <property type="project" value="UniProtKB-KW"/>
</dbReference>
<dbReference type="Gene3D" id="2.30.130.120">
    <property type="match status" value="1"/>
</dbReference>
<dbReference type="InterPro" id="IPR035290">
    <property type="entry name" value="Beta/Mu-DGTX-Dc1"/>
</dbReference>
<dbReference type="Pfam" id="PF17491">
    <property type="entry name" value="m_DGTX_Dc1a_b_c"/>
    <property type="match status" value="1"/>
</dbReference>
<organism>
    <name type="scientific">Diguetia canities</name>
    <name type="common">Desert bush spider</name>
    <name type="synonym">Segestria canities</name>
    <dbReference type="NCBI Taxonomy" id="38407"/>
    <lineage>
        <taxon>Eukaryota</taxon>
        <taxon>Metazoa</taxon>
        <taxon>Ecdysozoa</taxon>
        <taxon>Arthropoda</taxon>
        <taxon>Chelicerata</taxon>
        <taxon>Arachnida</taxon>
        <taxon>Araneae</taxon>
        <taxon>Araneomorphae</taxon>
        <taxon>Haplogynae</taxon>
        <taxon>Pholcoidea</taxon>
        <taxon>Diguetidae</taxon>
        <taxon>Diguetia</taxon>
    </lineage>
</organism>
<sequence>AKDGDVKGPAGCMKYKSGDCRGKTCCDQQYLWYKWRNLACRCFTVEVFKKDCWCNDIS</sequence>
<reference key="1">
    <citation type="journal article" date="1995" name="Insect Biochem. Mol. Biol.">
        <title>Characterization and cloning of insecticidal peptides from the primitive weaving spider Diguetia canities.</title>
        <authorList>
            <person name="Krapcho K.J."/>
            <person name="Kral R.M. Jr."/>
            <person name="Vanwagenen B.C."/>
            <person name="Eppler K.G."/>
            <person name="Morgan T.K."/>
        </authorList>
    </citation>
    <scope>PROTEIN SEQUENCE</scope>
    <scope>MASS SPECTROMETRY</scope>
    <scope>TOXIC DOSE</scope>
    <scope>SUBCELLULAR LOCATION</scope>
    <source>
        <tissue>Venom</tissue>
    </source>
</reference>
<proteinExistence type="evidence at protein level"/>
<feature type="chain" id="PRO_0000087667" description="Mu-diguetoxin-Dc1b">
    <location>
        <begin position="1"/>
        <end position="58"/>
    </location>
</feature>
<feature type="disulfide bond" evidence="1">
    <location>
        <begin position="12"/>
        <end position="26"/>
    </location>
</feature>
<feature type="disulfide bond" evidence="1">
    <location>
        <begin position="20"/>
        <end position="40"/>
    </location>
</feature>
<feature type="disulfide bond" evidence="1">
    <location>
        <begin position="25"/>
        <end position="54"/>
    </location>
</feature>
<feature type="disulfide bond" evidence="1">
    <location>
        <begin position="42"/>
        <end position="52"/>
    </location>
</feature>
<comment type="function">
    <text>Acts by delaying the inactivation of presynaptic voltage-sensitive sodium channels (Nav). Acts against insects and cause a progressive spastic paralysis.</text>
</comment>
<comment type="subcellular location">
    <subcellularLocation>
        <location evidence="2">Secreted</location>
    </subcellularLocation>
</comment>
<comment type="tissue specificity">
    <text evidence="5">Expressed by the venom gland.</text>
</comment>
<comment type="domain">
    <text evidence="4">The presence of a 'disulfide through disulfide knot' structurally defines this protein as a knottin.</text>
</comment>
<comment type="mass spectrometry"/>
<comment type="toxic dose">
    <text evidence="2">PD(50) is 0.71 nmol/g in lepidopteran larvae.</text>
</comment>
<comment type="similarity">
    <text evidence="4">Belongs to the neurotoxin 26 (DTX) family.</text>
</comment>
<comment type="caution">
    <text evidence="4">The measured molecular weight is 27 daltons higher than the expected one suggesting a sequence error.</text>
</comment>
<protein>
    <recommendedName>
        <fullName>Mu-diguetoxin-Dc1b</fullName>
        <shortName>Mu-DGTX-Dc1b</shortName>
    </recommendedName>
    <alternativeName>
        <fullName evidence="3">Insecticidal toxin DTX11</fullName>
    </alternativeName>
</protein>
<name>TXI11_DIGCA</name>